<gene>
    <name type="primary">iorB</name>
</gene>
<reference key="1">
    <citation type="journal article" date="1995" name="J. Biol. Chem.">
        <title>Molecular cloning of the isoquinoline 1-oxidoreductase genes from Pseudomonas diminuta 7, structural analysis of iorA and iorB, and sequence comparisons with other molybdenum-containing hydroxylases.</title>
        <authorList>
            <person name="Lehmann M."/>
            <person name="Tshisuaka B."/>
            <person name="Fetzner S."/>
            <person name="Lingens F.Y."/>
        </authorList>
    </citation>
    <scope>NUCLEOTIDE SEQUENCE [GENOMIC DNA]</scope>
    <source>
        <strain>7</strain>
    </source>
</reference>
<reference key="2">
    <citation type="journal article" date="1994" name="J. Biol. Chem.">
        <title>Purification and characterization of isoquinoline 1-oxidoreductase from Pseudomonas diminuta 7, a novel molybdenum-containing hydroxylase.</title>
        <authorList>
            <person name="Lehmann M."/>
            <person name="Tshisuaka B."/>
            <person name="Fetzner S."/>
            <person name="Roger P."/>
            <person name="Lingens F.Y."/>
        </authorList>
    </citation>
    <scope>CHARACTERIZATION</scope>
    <source>
        <strain>7</strain>
    </source>
</reference>
<proteinExistence type="evidence at protein level"/>
<sequence length="781" mass="84483">MKTVLPSVPETVRLSRRGFLVQAGTITCSVAFGSVPAAAGDTAESTPSIAAVSPNVWVRVHADGIVDIVCPAVELGQGAHTALPRFVAEELDADWDRVRVQQAGASDKVYGNPLAWGTQFTAASRTTVGYFDVLRVAGAQARFVLVQTAARRWSVPADQLETQKGVVLHRRSRRSATYGELVASVQVPESFPHFFARNEATQPADDYFGAAPPSVVAQAAGPASGAIALKHRSTYRLIGKDAPRKDIPPKVNGQACYGMDVQVPGMLYAMVETGPVAGMAPERVDDGAARQVPGIHHVLSLPHGVAVVGRDIFAVRAARARLLVNWKANPDKQSYDSGQVLDEFSDLCRNGIERNAVQAWKQGELSSIDAVFARPDVRIESFEMQSDLVYQAPMEPQSAVIQPHADGSAEAWVGTQWPTVEQGFAAGILGIAPDKLTMHLPLVGGGFGRRLEPGALVDAAHIVRAIGKTVKVIWSREDDLKRNPFRQALACRVEAAVLEKDQRILALRHTVAADSWLARLFPQYFNAYQQTDPGNWIGGMVAYDVPLQRIDALTPRRSVDVCYMRGIGVAQVKFAQESLVDQIARRLNADPVDFRLAHLNTSPRGAAVVRTVAEMSDWKRRSADAGGGMALGLAYTPYSNAHVALVSEVHFNRSENTLSVSRVWCAVDVGMVAQPDIVKAQMEGGIIQGLSVALMERVQVAKGVLQHSNFHDYPMLRMSQVPQIHVRLVETDQAMAGVAELGLLQIGPAINNAFARITGQHLRSLPMRPALAQMKRSGPTA</sequence>
<protein>
    <recommendedName>
        <fullName>Isoquinoline 1-oxidoreductase subunit beta</fullName>
        <ecNumber>1.3.99.16</ecNumber>
    </recommendedName>
</protein>
<comment type="function">
    <text>Specific towards N-containing N-heterocyclic substrates, including isoquinoline, isoquinolin-5-ol, phthalazine and quinazoline.</text>
</comment>
<comment type="catalytic activity">
    <reaction>
        <text>isoquinoline + A + H2O = isoquinolin-1(2H)-one + AH2</text>
        <dbReference type="Rhea" id="RHEA:11588"/>
        <dbReference type="ChEBI" id="CHEBI:13193"/>
        <dbReference type="ChEBI" id="CHEBI:15377"/>
        <dbReference type="ChEBI" id="CHEBI:16092"/>
        <dbReference type="ChEBI" id="CHEBI:17499"/>
        <dbReference type="ChEBI" id="CHEBI:18350"/>
        <dbReference type="EC" id="1.3.99.16"/>
    </reaction>
</comment>
<comment type="subunit">
    <text>Heterodimer of an alpha chain and a beta chain.</text>
</comment>
<dbReference type="EC" id="1.3.99.16"/>
<dbReference type="EMBL" id="Z48918">
    <property type="protein sequence ID" value="CAA88754.1"/>
    <property type="molecule type" value="Genomic_DNA"/>
</dbReference>
<dbReference type="PIR" id="B56939">
    <property type="entry name" value="B56939"/>
</dbReference>
<dbReference type="SMR" id="Q51698"/>
<dbReference type="KEGG" id="ag:CAA88754"/>
<dbReference type="BioCyc" id="MetaCyc:MONOMER-20839"/>
<dbReference type="BRENDA" id="1.3.99.16">
    <property type="organism ID" value="982"/>
</dbReference>
<dbReference type="GO" id="GO:0047121">
    <property type="term" value="F:isoquinoline 1-oxidoreductase activity"/>
    <property type="evidence" value="ECO:0007669"/>
    <property type="project" value="UniProtKB-EC"/>
</dbReference>
<dbReference type="Gene3D" id="3.90.1170.50">
    <property type="entry name" value="Aldehyde oxidase/xanthine dehydrogenase, a/b hammerhead"/>
    <property type="match status" value="1"/>
</dbReference>
<dbReference type="Gene3D" id="3.30.365.10">
    <property type="entry name" value="Aldehyde oxidase/xanthine dehydrogenase, molybdopterin binding domain"/>
    <property type="match status" value="4"/>
</dbReference>
<dbReference type="InterPro" id="IPR000674">
    <property type="entry name" value="Ald_Oxase/Xan_DH_a/b"/>
</dbReference>
<dbReference type="InterPro" id="IPR036856">
    <property type="entry name" value="Ald_Oxase/Xan_DH_a/b_sf"/>
</dbReference>
<dbReference type="InterPro" id="IPR008274">
    <property type="entry name" value="AldOxase/xan_DH_MoCoBD1"/>
</dbReference>
<dbReference type="InterPro" id="IPR046867">
    <property type="entry name" value="AldOxase/xan_DH_MoCoBD2"/>
</dbReference>
<dbReference type="InterPro" id="IPR037165">
    <property type="entry name" value="AldOxase/xan_DH_Mopterin-bd_sf"/>
</dbReference>
<dbReference type="InterPro" id="IPR052516">
    <property type="entry name" value="N-heterocyclic_Hydroxylase"/>
</dbReference>
<dbReference type="InterPro" id="IPR012368">
    <property type="entry name" value="OxRdtase_Mopterin-bd_su_IorB"/>
</dbReference>
<dbReference type="InterPro" id="IPR006311">
    <property type="entry name" value="TAT_signal"/>
</dbReference>
<dbReference type="PANTHER" id="PTHR47495">
    <property type="entry name" value="ALDEHYDE DEHYDROGENASE"/>
    <property type="match status" value="1"/>
</dbReference>
<dbReference type="PANTHER" id="PTHR47495:SF2">
    <property type="entry name" value="ALDEHYDE DEHYDROGENASE"/>
    <property type="match status" value="1"/>
</dbReference>
<dbReference type="Pfam" id="PF02738">
    <property type="entry name" value="MoCoBD_1"/>
    <property type="match status" value="1"/>
</dbReference>
<dbReference type="Pfam" id="PF20256">
    <property type="entry name" value="MoCoBD_2"/>
    <property type="match status" value="2"/>
</dbReference>
<dbReference type="PIRSF" id="PIRSF036389">
    <property type="entry name" value="IOR_B"/>
    <property type="match status" value="1"/>
</dbReference>
<dbReference type="SMART" id="SM01008">
    <property type="entry name" value="Ald_Xan_dh_C"/>
    <property type="match status" value="1"/>
</dbReference>
<dbReference type="SUPFAM" id="SSF54665">
    <property type="entry name" value="CO dehydrogenase molybdoprotein N-domain-like"/>
    <property type="match status" value="1"/>
</dbReference>
<dbReference type="SUPFAM" id="SSF56003">
    <property type="entry name" value="Molybdenum cofactor-binding domain"/>
    <property type="match status" value="2"/>
</dbReference>
<dbReference type="PROSITE" id="PS51318">
    <property type="entry name" value="TAT"/>
    <property type="match status" value="1"/>
</dbReference>
<keyword id="KW-0560">Oxidoreductase</keyword>
<accession>Q51698</accession>
<feature type="chain" id="PRO_0000084216" description="Isoquinoline 1-oxidoreductase subunit beta">
    <location>
        <begin position="1"/>
        <end position="781"/>
    </location>
</feature>
<name>IORB_BREDI</name>
<organism>
    <name type="scientific">Brevundimonas diminuta</name>
    <name type="common">Pseudomonas diminuta</name>
    <dbReference type="NCBI Taxonomy" id="293"/>
    <lineage>
        <taxon>Bacteria</taxon>
        <taxon>Pseudomonadati</taxon>
        <taxon>Pseudomonadota</taxon>
        <taxon>Alphaproteobacteria</taxon>
        <taxon>Caulobacterales</taxon>
        <taxon>Caulobacteraceae</taxon>
        <taxon>Brevundimonas</taxon>
    </lineage>
</organism>